<gene>
    <name evidence="1" type="primary">gatC</name>
    <name type="ordered locus">M446_4339</name>
</gene>
<keyword id="KW-0067">ATP-binding</keyword>
<keyword id="KW-0436">Ligase</keyword>
<keyword id="KW-0547">Nucleotide-binding</keyword>
<keyword id="KW-0648">Protein biosynthesis</keyword>
<organism>
    <name type="scientific">Methylobacterium sp. (strain 4-46)</name>
    <dbReference type="NCBI Taxonomy" id="426117"/>
    <lineage>
        <taxon>Bacteria</taxon>
        <taxon>Pseudomonadati</taxon>
        <taxon>Pseudomonadota</taxon>
        <taxon>Alphaproteobacteria</taxon>
        <taxon>Hyphomicrobiales</taxon>
        <taxon>Methylobacteriaceae</taxon>
        <taxon>Methylobacterium</taxon>
    </lineage>
</organism>
<reference key="1">
    <citation type="submission" date="2008-02" db="EMBL/GenBank/DDBJ databases">
        <title>Complete sequence of chromosome of Methylobacterium sp. 4-46.</title>
        <authorList>
            <consortium name="US DOE Joint Genome Institute"/>
            <person name="Copeland A."/>
            <person name="Lucas S."/>
            <person name="Lapidus A."/>
            <person name="Glavina del Rio T."/>
            <person name="Dalin E."/>
            <person name="Tice H."/>
            <person name="Bruce D."/>
            <person name="Goodwin L."/>
            <person name="Pitluck S."/>
            <person name="Chertkov O."/>
            <person name="Brettin T."/>
            <person name="Detter J.C."/>
            <person name="Han C."/>
            <person name="Kuske C.R."/>
            <person name="Schmutz J."/>
            <person name="Larimer F."/>
            <person name="Land M."/>
            <person name="Hauser L."/>
            <person name="Kyrpides N."/>
            <person name="Ivanova N."/>
            <person name="Marx C.J."/>
            <person name="Richardson P."/>
        </authorList>
    </citation>
    <scope>NUCLEOTIDE SEQUENCE [LARGE SCALE GENOMIC DNA]</scope>
    <source>
        <strain>4-46</strain>
    </source>
</reference>
<name>GATC_METS4</name>
<accession>B0UHC7</accession>
<proteinExistence type="inferred from homology"/>
<sequence>MSVDAQTVRRIAHLARIAVSDAEVPPLQDELNAILAFVEQLGAVDVSGVEPMTSVTPMAMKQRDDAVTDGGYAREIVFNAPLSEDNYFLVPKVVE</sequence>
<protein>
    <recommendedName>
        <fullName evidence="1">Aspartyl/glutamyl-tRNA(Asn/Gln) amidotransferase subunit C</fullName>
        <shortName evidence="1">Asp/Glu-ADT subunit C</shortName>
        <ecNumber evidence="1">6.3.5.-</ecNumber>
    </recommendedName>
</protein>
<evidence type="ECO:0000255" key="1">
    <source>
        <dbReference type="HAMAP-Rule" id="MF_00122"/>
    </source>
</evidence>
<feature type="chain" id="PRO_1000095297" description="Aspartyl/glutamyl-tRNA(Asn/Gln) amidotransferase subunit C">
    <location>
        <begin position="1"/>
        <end position="95"/>
    </location>
</feature>
<dbReference type="EC" id="6.3.5.-" evidence="1"/>
<dbReference type="EMBL" id="CP000943">
    <property type="protein sequence ID" value="ACA18682.1"/>
    <property type="molecule type" value="Genomic_DNA"/>
</dbReference>
<dbReference type="RefSeq" id="WP_012334071.1">
    <property type="nucleotide sequence ID" value="NC_010511.1"/>
</dbReference>
<dbReference type="SMR" id="B0UHC7"/>
<dbReference type="STRING" id="426117.M446_4339"/>
<dbReference type="KEGG" id="met:M446_4339"/>
<dbReference type="eggNOG" id="COG0721">
    <property type="taxonomic scope" value="Bacteria"/>
</dbReference>
<dbReference type="HOGENOM" id="CLU_105899_2_0_5"/>
<dbReference type="GO" id="GO:0050566">
    <property type="term" value="F:asparaginyl-tRNA synthase (glutamine-hydrolyzing) activity"/>
    <property type="evidence" value="ECO:0007669"/>
    <property type="project" value="RHEA"/>
</dbReference>
<dbReference type="GO" id="GO:0005524">
    <property type="term" value="F:ATP binding"/>
    <property type="evidence" value="ECO:0007669"/>
    <property type="project" value="UniProtKB-KW"/>
</dbReference>
<dbReference type="GO" id="GO:0050567">
    <property type="term" value="F:glutaminyl-tRNA synthase (glutamine-hydrolyzing) activity"/>
    <property type="evidence" value="ECO:0007669"/>
    <property type="project" value="UniProtKB-UniRule"/>
</dbReference>
<dbReference type="GO" id="GO:0070681">
    <property type="term" value="P:glutaminyl-tRNAGln biosynthesis via transamidation"/>
    <property type="evidence" value="ECO:0007669"/>
    <property type="project" value="TreeGrafter"/>
</dbReference>
<dbReference type="GO" id="GO:0006450">
    <property type="term" value="P:regulation of translational fidelity"/>
    <property type="evidence" value="ECO:0007669"/>
    <property type="project" value="InterPro"/>
</dbReference>
<dbReference type="GO" id="GO:0006412">
    <property type="term" value="P:translation"/>
    <property type="evidence" value="ECO:0007669"/>
    <property type="project" value="UniProtKB-UniRule"/>
</dbReference>
<dbReference type="Gene3D" id="1.10.20.60">
    <property type="entry name" value="Glu-tRNAGln amidotransferase C subunit, N-terminal domain"/>
    <property type="match status" value="1"/>
</dbReference>
<dbReference type="HAMAP" id="MF_00122">
    <property type="entry name" value="GatC"/>
    <property type="match status" value="1"/>
</dbReference>
<dbReference type="InterPro" id="IPR036113">
    <property type="entry name" value="Asp/Glu-ADT_sf_sub_c"/>
</dbReference>
<dbReference type="InterPro" id="IPR003837">
    <property type="entry name" value="GatC"/>
</dbReference>
<dbReference type="NCBIfam" id="TIGR00135">
    <property type="entry name" value="gatC"/>
    <property type="match status" value="1"/>
</dbReference>
<dbReference type="PANTHER" id="PTHR15004">
    <property type="entry name" value="GLUTAMYL-TRNA(GLN) AMIDOTRANSFERASE SUBUNIT C, MITOCHONDRIAL"/>
    <property type="match status" value="1"/>
</dbReference>
<dbReference type="PANTHER" id="PTHR15004:SF0">
    <property type="entry name" value="GLUTAMYL-TRNA(GLN) AMIDOTRANSFERASE SUBUNIT C, MITOCHONDRIAL"/>
    <property type="match status" value="1"/>
</dbReference>
<dbReference type="Pfam" id="PF02686">
    <property type="entry name" value="GatC"/>
    <property type="match status" value="1"/>
</dbReference>
<dbReference type="SUPFAM" id="SSF141000">
    <property type="entry name" value="Glu-tRNAGln amidotransferase C subunit"/>
    <property type="match status" value="1"/>
</dbReference>
<comment type="function">
    <text evidence="1">Allows the formation of correctly charged Asn-tRNA(Asn) or Gln-tRNA(Gln) through the transamidation of misacylated Asp-tRNA(Asn) or Glu-tRNA(Gln) in organisms which lack either or both of asparaginyl-tRNA or glutaminyl-tRNA synthetases. The reaction takes place in the presence of glutamine and ATP through an activated phospho-Asp-tRNA(Asn) or phospho-Glu-tRNA(Gln).</text>
</comment>
<comment type="catalytic activity">
    <reaction evidence="1">
        <text>L-glutamyl-tRNA(Gln) + L-glutamine + ATP + H2O = L-glutaminyl-tRNA(Gln) + L-glutamate + ADP + phosphate + H(+)</text>
        <dbReference type="Rhea" id="RHEA:17521"/>
        <dbReference type="Rhea" id="RHEA-COMP:9681"/>
        <dbReference type="Rhea" id="RHEA-COMP:9684"/>
        <dbReference type="ChEBI" id="CHEBI:15377"/>
        <dbReference type="ChEBI" id="CHEBI:15378"/>
        <dbReference type="ChEBI" id="CHEBI:29985"/>
        <dbReference type="ChEBI" id="CHEBI:30616"/>
        <dbReference type="ChEBI" id="CHEBI:43474"/>
        <dbReference type="ChEBI" id="CHEBI:58359"/>
        <dbReference type="ChEBI" id="CHEBI:78520"/>
        <dbReference type="ChEBI" id="CHEBI:78521"/>
        <dbReference type="ChEBI" id="CHEBI:456216"/>
    </reaction>
</comment>
<comment type="catalytic activity">
    <reaction evidence="1">
        <text>L-aspartyl-tRNA(Asn) + L-glutamine + ATP + H2O = L-asparaginyl-tRNA(Asn) + L-glutamate + ADP + phosphate + 2 H(+)</text>
        <dbReference type="Rhea" id="RHEA:14513"/>
        <dbReference type="Rhea" id="RHEA-COMP:9674"/>
        <dbReference type="Rhea" id="RHEA-COMP:9677"/>
        <dbReference type="ChEBI" id="CHEBI:15377"/>
        <dbReference type="ChEBI" id="CHEBI:15378"/>
        <dbReference type="ChEBI" id="CHEBI:29985"/>
        <dbReference type="ChEBI" id="CHEBI:30616"/>
        <dbReference type="ChEBI" id="CHEBI:43474"/>
        <dbReference type="ChEBI" id="CHEBI:58359"/>
        <dbReference type="ChEBI" id="CHEBI:78515"/>
        <dbReference type="ChEBI" id="CHEBI:78516"/>
        <dbReference type="ChEBI" id="CHEBI:456216"/>
    </reaction>
</comment>
<comment type="subunit">
    <text evidence="1">Heterotrimer of A, B and C subunits.</text>
</comment>
<comment type="similarity">
    <text evidence="1">Belongs to the GatC family.</text>
</comment>